<keyword id="KW-0963">Cytoplasm</keyword>
<keyword id="KW-0251">Elongation factor</keyword>
<keyword id="KW-0342">GTP-binding</keyword>
<keyword id="KW-0378">Hydrolase</keyword>
<keyword id="KW-0547">Nucleotide-binding</keyword>
<keyword id="KW-0597">Phosphoprotein</keyword>
<keyword id="KW-0648">Protein biosynthesis</keyword>
<keyword id="KW-1185">Reference proteome</keyword>
<proteinExistence type="inferred from homology"/>
<evidence type="ECO:0000250" key="1"/>
<evidence type="ECO:0000250" key="2">
    <source>
        <dbReference type="UniProtKB" id="P32324"/>
    </source>
</evidence>
<evidence type="ECO:0000255" key="3">
    <source>
        <dbReference type="PROSITE-ProRule" id="PRU01059"/>
    </source>
</evidence>
<evidence type="ECO:0000305" key="4"/>
<name>EF2_NEUCR</name>
<comment type="function">
    <text evidence="2">Catalyzes the GTP-dependent ribosomal translocation step during translation elongation. During this step, the ribosome changes from the pre-translocational (PRE) to the post-translocational (POST) state as the newly formed A-site-bound peptidyl-tRNA and P-site-bound deacylated tRNA move to the P and E sites, respectively. Catalyzes the coordinated movement of the two tRNA molecules, the mRNA and conformational changes in the ribosome.</text>
</comment>
<comment type="catalytic activity">
    <reaction evidence="2">
        <text>GTP + H2O = GDP + phosphate + H(+)</text>
        <dbReference type="Rhea" id="RHEA:19669"/>
        <dbReference type="ChEBI" id="CHEBI:15377"/>
        <dbReference type="ChEBI" id="CHEBI:15378"/>
        <dbReference type="ChEBI" id="CHEBI:37565"/>
        <dbReference type="ChEBI" id="CHEBI:43474"/>
        <dbReference type="ChEBI" id="CHEBI:58189"/>
    </reaction>
    <physiologicalReaction direction="left-to-right" evidence="2">
        <dbReference type="Rhea" id="RHEA:19670"/>
    </physiologicalReaction>
</comment>
<comment type="subcellular location">
    <subcellularLocation>
        <location evidence="2">Cytoplasm</location>
    </subcellularLocation>
</comment>
<comment type="similarity">
    <text evidence="3">Belongs to the TRAFAC class translation factor GTPase superfamily. Classic translation factor GTPase family. EF-G/EF-2 subfamily.</text>
</comment>
<dbReference type="EC" id="3.6.5.-" evidence="2"/>
<dbReference type="EMBL" id="AF258620">
    <property type="protein sequence ID" value="AAK49353.1"/>
    <property type="molecule type" value="Genomic_DNA"/>
</dbReference>
<dbReference type="EMBL" id="CM002239">
    <property type="protein sequence ID" value="EAA33050.2"/>
    <property type="molecule type" value="Genomic_DNA"/>
</dbReference>
<dbReference type="RefSeq" id="XP_962286.2">
    <property type="nucleotide sequence ID" value="XM_957193.3"/>
</dbReference>
<dbReference type="SMR" id="Q96X45"/>
<dbReference type="FunCoup" id="Q96X45">
    <property type="interactions" value="1118"/>
</dbReference>
<dbReference type="STRING" id="367110.Q96X45"/>
<dbReference type="PaxDb" id="5141-EFNCRP00000007996"/>
<dbReference type="EnsemblFungi" id="EAA33050">
    <property type="protein sequence ID" value="EAA33050"/>
    <property type="gene ID" value="NCU07700"/>
</dbReference>
<dbReference type="GeneID" id="3878434"/>
<dbReference type="KEGG" id="ncr:NCU07700"/>
<dbReference type="VEuPathDB" id="FungiDB:NCU07700"/>
<dbReference type="HOGENOM" id="CLU_002794_11_2_1"/>
<dbReference type="InParanoid" id="Q96X45"/>
<dbReference type="OMA" id="ASWNTEN"/>
<dbReference type="OrthoDB" id="364892at2759"/>
<dbReference type="Proteomes" id="UP000001805">
    <property type="component" value="Chromosome 4, Linkage Group IV"/>
</dbReference>
<dbReference type="GO" id="GO:0005829">
    <property type="term" value="C:cytosol"/>
    <property type="evidence" value="ECO:0000318"/>
    <property type="project" value="GO_Central"/>
</dbReference>
<dbReference type="GO" id="GO:1990904">
    <property type="term" value="C:ribonucleoprotein complex"/>
    <property type="evidence" value="ECO:0000318"/>
    <property type="project" value="GO_Central"/>
</dbReference>
<dbReference type="GO" id="GO:0005525">
    <property type="term" value="F:GTP binding"/>
    <property type="evidence" value="ECO:0007669"/>
    <property type="project" value="UniProtKB-KW"/>
</dbReference>
<dbReference type="GO" id="GO:0003924">
    <property type="term" value="F:GTPase activity"/>
    <property type="evidence" value="ECO:0000318"/>
    <property type="project" value="GO_Central"/>
</dbReference>
<dbReference type="GO" id="GO:0043022">
    <property type="term" value="F:ribosome binding"/>
    <property type="evidence" value="ECO:0000318"/>
    <property type="project" value="GO_Central"/>
</dbReference>
<dbReference type="GO" id="GO:0003746">
    <property type="term" value="F:translation elongation factor activity"/>
    <property type="evidence" value="ECO:0000318"/>
    <property type="project" value="GO_Central"/>
</dbReference>
<dbReference type="GO" id="GO:0006414">
    <property type="term" value="P:translational elongation"/>
    <property type="evidence" value="ECO:0000318"/>
    <property type="project" value="GO_Central"/>
</dbReference>
<dbReference type="CDD" id="cd01681">
    <property type="entry name" value="aeEF2_snRNP_like_IV"/>
    <property type="match status" value="1"/>
</dbReference>
<dbReference type="CDD" id="cd04096">
    <property type="entry name" value="eEF2_snRNP_like_C"/>
    <property type="match status" value="1"/>
</dbReference>
<dbReference type="CDD" id="cd01885">
    <property type="entry name" value="EF2"/>
    <property type="match status" value="1"/>
</dbReference>
<dbReference type="CDD" id="cd16261">
    <property type="entry name" value="EF2_snRNP_III"/>
    <property type="match status" value="1"/>
</dbReference>
<dbReference type="CDD" id="cd03700">
    <property type="entry name" value="EF2_snRNP_like_II"/>
    <property type="match status" value="1"/>
</dbReference>
<dbReference type="FunFam" id="2.40.30.10:FF:000010">
    <property type="entry name" value="Translation elongation factor 2"/>
    <property type="match status" value="1"/>
</dbReference>
<dbReference type="FunFam" id="3.30.230.10:FF:000006">
    <property type="entry name" value="Translation elongation factor 2"/>
    <property type="match status" value="1"/>
</dbReference>
<dbReference type="FunFam" id="3.30.70.240:FF:000003">
    <property type="entry name" value="Translation elongation factor 2"/>
    <property type="match status" value="1"/>
</dbReference>
<dbReference type="FunFam" id="3.30.70.870:FF:000002">
    <property type="entry name" value="Translation elongation factor 2"/>
    <property type="match status" value="1"/>
</dbReference>
<dbReference type="FunFam" id="3.40.50.300:FF:000058">
    <property type="entry name" value="Translation elongation factor 2"/>
    <property type="match status" value="1"/>
</dbReference>
<dbReference type="Gene3D" id="3.30.230.10">
    <property type="match status" value="1"/>
</dbReference>
<dbReference type="Gene3D" id="3.30.70.240">
    <property type="match status" value="1"/>
</dbReference>
<dbReference type="Gene3D" id="3.30.70.870">
    <property type="entry name" value="Elongation Factor G (Translational Gtpase), domain 3"/>
    <property type="match status" value="1"/>
</dbReference>
<dbReference type="Gene3D" id="3.40.50.300">
    <property type="entry name" value="P-loop containing nucleotide triphosphate hydrolases"/>
    <property type="match status" value="1"/>
</dbReference>
<dbReference type="Gene3D" id="2.40.30.10">
    <property type="entry name" value="Translation factors"/>
    <property type="match status" value="1"/>
</dbReference>
<dbReference type="InterPro" id="IPR041095">
    <property type="entry name" value="EFG_II"/>
</dbReference>
<dbReference type="InterPro" id="IPR035647">
    <property type="entry name" value="EFG_III/V"/>
</dbReference>
<dbReference type="InterPro" id="IPR000640">
    <property type="entry name" value="EFG_V-like"/>
</dbReference>
<dbReference type="InterPro" id="IPR004161">
    <property type="entry name" value="EFTu-like_2"/>
</dbReference>
<dbReference type="InterPro" id="IPR031157">
    <property type="entry name" value="G_TR_CS"/>
</dbReference>
<dbReference type="InterPro" id="IPR027417">
    <property type="entry name" value="P-loop_NTPase"/>
</dbReference>
<dbReference type="InterPro" id="IPR020568">
    <property type="entry name" value="Ribosomal_Su5_D2-typ_SF"/>
</dbReference>
<dbReference type="InterPro" id="IPR014721">
    <property type="entry name" value="Ribsml_uS5_D2-typ_fold_subgr"/>
</dbReference>
<dbReference type="InterPro" id="IPR005225">
    <property type="entry name" value="Small_GTP-bd"/>
</dbReference>
<dbReference type="InterPro" id="IPR000795">
    <property type="entry name" value="T_Tr_GTP-bd_dom"/>
</dbReference>
<dbReference type="InterPro" id="IPR009000">
    <property type="entry name" value="Transl_B-barrel_sf"/>
</dbReference>
<dbReference type="InterPro" id="IPR005517">
    <property type="entry name" value="Transl_elong_EFG/EF2_IV"/>
</dbReference>
<dbReference type="NCBIfam" id="TIGR00231">
    <property type="entry name" value="small_GTP"/>
    <property type="match status" value="1"/>
</dbReference>
<dbReference type="PANTHER" id="PTHR42908:SF10">
    <property type="entry name" value="EUKARYOTIC TRANSLATION ELONGATION FACTOR 2"/>
    <property type="match status" value="1"/>
</dbReference>
<dbReference type="PANTHER" id="PTHR42908">
    <property type="entry name" value="TRANSLATION ELONGATION FACTOR-RELATED"/>
    <property type="match status" value="1"/>
</dbReference>
<dbReference type="Pfam" id="PF00679">
    <property type="entry name" value="EFG_C"/>
    <property type="match status" value="1"/>
</dbReference>
<dbReference type="Pfam" id="PF14492">
    <property type="entry name" value="EFG_III"/>
    <property type="match status" value="1"/>
</dbReference>
<dbReference type="Pfam" id="PF03764">
    <property type="entry name" value="EFG_IV"/>
    <property type="match status" value="1"/>
</dbReference>
<dbReference type="Pfam" id="PF00009">
    <property type="entry name" value="GTP_EFTU"/>
    <property type="match status" value="1"/>
</dbReference>
<dbReference type="Pfam" id="PF03144">
    <property type="entry name" value="GTP_EFTU_D2"/>
    <property type="match status" value="1"/>
</dbReference>
<dbReference type="PRINTS" id="PR00315">
    <property type="entry name" value="ELONGATNFCT"/>
</dbReference>
<dbReference type="SMART" id="SM00838">
    <property type="entry name" value="EFG_C"/>
    <property type="match status" value="1"/>
</dbReference>
<dbReference type="SMART" id="SM00889">
    <property type="entry name" value="EFG_IV"/>
    <property type="match status" value="1"/>
</dbReference>
<dbReference type="SUPFAM" id="SSF54980">
    <property type="entry name" value="EF-G C-terminal domain-like"/>
    <property type="match status" value="2"/>
</dbReference>
<dbReference type="SUPFAM" id="SSF52540">
    <property type="entry name" value="P-loop containing nucleoside triphosphate hydrolases"/>
    <property type="match status" value="1"/>
</dbReference>
<dbReference type="SUPFAM" id="SSF54211">
    <property type="entry name" value="Ribosomal protein S5 domain 2-like"/>
    <property type="match status" value="1"/>
</dbReference>
<dbReference type="SUPFAM" id="SSF50447">
    <property type="entry name" value="Translation proteins"/>
    <property type="match status" value="1"/>
</dbReference>
<dbReference type="PROSITE" id="PS00301">
    <property type="entry name" value="G_TR_1"/>
    <property type="match status" value="1"/>
</dbReference>
<dbReference type="PROSITE" id="PS51722">
    <property type="entry name" value="G_TR_2"/>
    <property type="match status" value="1"/>
</dbReference>
<organism>
    <name type="scientific">Neurospora crassa (strain ATCC 24698 / 74-OR23-1A / CBS 708.71 / DSM 1257 / FGSC 987)</name>
    <dbReference type="NCBI Taxonomy" id="367110"/>
    <lineage>
        <taxon>Eukaryota</taxon>
        <taxon>Fungi</taxon>
        <taxon>Dikarya</taxon>
        <taxon>Ascomycota</taxon>
        <taxon>Pezizomycotina</taxon>
        <taxon>Sordariomycetes</taxon>
        <taxon>Sordariomycetidae</taxon>
        <taxon>Sordariales</taxon>
        <taxon>Sordariaceae</taxon>
        <taxon>Neurospora</taxon>
    </lineage>
</organism>
<reference key="1">
    <citation type="journal article" date="2001" name="Mol. Gen. Genet.">
        <title>The Neurospora crassa colonial temperature-sensitive 3 (cot-3) gene encodes protein elongation factor 2.</title>
        <authorList>
            <person name="Propheta O."/>
            <person name="Vierula J."/>
            <person name="Toporowski P."/>
            <person name="Gorovits R."/>
            <person name="Yarden O."/>
        </authorList>
    </citation>
    <scope>NUCLEOTIDE SEQUENCE [GENOMIC DNA]</scope>
</reference>
<reference key="2">
    <citation type="journal article" date="2003" name="Nature">
        <title>The genome sequence of the filamentous fungus Neurospora crassa.</title>
        <authorList>
            <person name="Galagan J.E."/>
            <person name="Calvo S.E."/>
            <person name="Borkovich K.A."/>
            <person name="Selker E.U."/>
            <person name="Read N.D."/>
            <person name="Jaffe D.B."/>
            <person name="FitzHugh W."/>
            <person name="Ma L.-J."/>
            <person name="Smirnov S."/>
            <person name="Purcell S."/>
            <person name="Rehman B."/>
            <person name="Elkins T."/>
            <person name="Engels R."/>
            <person name="Wang S."/>
            <person name="Nielsen C.B."/>
            <person name="Butler J."/>
            <person name="Endrizzi M."/>
            <person name="Qui D."/>
            <person name="Ianakiev P."/>
            <person name="Bell-Pedersen D."/>
            <person name="Nelson M.A."/>
            <person name="Werner-Washburne M."/>
            <person name="Selitrennikoff C.P."/>
            <person name="Kinsey J.A."/>
            <person name="Braun E.L."/>
            <person name="Zelter A."/>
            <person name="Schulte U."/>
            <person name="Kothe G.O."/>
            <person name="Jedd G."/>
            <person name="Mewes H.-W."/>
            <person name="Staben C."/>
            <person name="Marcotte E."/>
            <person name="Greenberg D."/>
            <person name="Roy A."/>
            <person name="Foley K."/>
            <person name="Naylor J."/>
            <person name="Stange-Thomann N."/>
            <person name="Barrett R."/>
            <person name="Gnerre S."/>
            <person name="Kamal M."/>
            <person name="Kamvysselis M."/>
            <person name="Mauceli E.W."/>
            <person name="Bielke C."/>
            <person name="Rudd S."/>
            <person name="Frishman D."/>
            <person name="Krystofova S."/>
            <person name="Rasmussen C."/>
            <person name="Metzenberg R.L."/>
            <person name="Perkins D.D."/>
            <person name="Kroken S."/>
            <person name="Cogoni C."/>
            <person name="Macino G."/>
            <person name="Catcheside D.E.A."/>
            <person name="Li W."/>
            <person name="Pratt R.J."/>
            <person name="Osmani S.A."/>
            <person name="DeSouza C.P.C."/>
            <person name="Glass N.L."/>
            <person name="Orbach M.J."/>
            <person name="Berglund J.A."/>
            <person name="Voelker R."/>
            <person name="Yarden O."/>
            <person name="Plamann M."/>
            <person name="Seiler S."/>
            <person name="Dunlap J.C."/>
            <person name="Radford A."/>
            <person name="Aramayo R."/>
            <person name="Natvig D.O."/>
            <person name="Alex L.A."/>
            <person name="Mannhaupt G."/>
            <person name="Ebbole D.J."/>
            <person name="Freitag M."/>
            <person name="Paulsen I."/>
            <person name="Sachs M.S."/>
            <person name="Lander E.S."/>
            <person name="Nusbaum C."/>
            <person name="Birren B.W."/>
        </authorList>
    </citation>
    <scope>NUCLEOTIDE SEQUENCE [LARGE SCALE GENOMIC DNA]</scope>
    <source>
        <strain>ATCC 24698 / 74-OR23-1A / CBS 708.71 / DSM 1257 / FGSC 987</strain>
    </source>
</reference>
<feature type="chain" id="PRO_0000091019" description="Elongation factor 2">
    <location>
        <begin position="1"/>
        <end position="844"/>
    </location>
</feature>
<feature type="domain" description="tr-type G" evidence="3">
    <location>
        <begin position="17"/>
        <end position="255"/>
    </location>
</feature>
<feature type="binding site" evidence="2">
    <location>
        <begin position="26"/>
        <end position="33"/>
    </location>
    <ligand>
        <name>GTP</name>
        <dbReference type="ChEBI" id="CHEBI:37565"/>
    </ligand>
</feature>
<feature type="binding site" evidence="2">
    <location>
        <begin position="160"/>
        <end position="163"/>
    </location>
    <ligand>
        <name>GTP</name>
        <dbReference type="ChEBI" id="CHEBI:37565"/>
    </ligand>
</feature>
<feature type="binding site" evidence="2">
    <location>
        <begin position="215"/>
        <end position="217"/>
    </location>
    <ligand>
        <name>GTP</name>
        <dbReference type="ChEBI" id="CHEBI:37565"/>
    </ligand>
</feature>
<feature type="modified residue" description="Phosphothreonine" evidence="1">
    <location>
        <position position="57"/>
    </location>
</feature>
<feature type="modified residue" description="Phosphothreonine" evidence="1">
    <location>
        <position position="59"/>
    </location>
</feature>
<feature type="modified residue" description="Diphthamide" evidence="2">
    <location>
        <position position="700"/>
    </location>
</feature>
<feature type="sequence variant" description="In cot-3 mutation; abnormal hypha elongation.">
    <original>I</original>
    <variation>N</variation>
    <location>
        <position position="278"/>
    </location>
</feature>
<feature type="sequence conflict" description="In Ref. 1; AAK49353." evidence="4" ref="1">
    <original>K</original>
    <variation>E</variation>
    <location>
        <position position="154"/>
    </location>
</feature>
<feature type="sequence conflict" description="In Ref. 1; AAK49353." evidence="4" ref="1">
    <original>A</original>
    <variation>G</variation>
    <location>
        <position position="397"/>
    </location>
</feature>
<feature type="sequence conflict" description="In Ref. 1; AAK49353." evidence="4" ref="1">
    <original>Y</original>
    <variation>H</variation>
    <location>
        <position position="419"/>
    </location>
</feature>
<feature type="sequence conflict" description="In Ref. 1; AAK49353." evidence="4" ref="1">
    <original>K</original>
    <variation>M</variation>
    <location>
        <position position="424"/>
    </location>
</feature>
<protein>
    <recommendedName>
        <fullName>Elongation factor 2</fullName>
        <shortName>EF-2</shortName>
        <ecNumber evidence="2">3.6.5.-</ecNumber>
    </recommendedName>
    <alternativeName>
        <fullName>Colonial temperature-sensitive 3</fullName>
    </alternativeName>
</protein>
<gene>
    <name type="primary">cot-3</name>
    <name type="ORF">NCU07700</name>
</gene>
<sequence length="844" mass="93262">MVNFTIDEIRALMDKPTNVRNMSVIAHVDHGKSTLTDSLLAKAGIISSGKAGEARATDTRADEQERGITIKSTAISLYGTLPDEEDIKDIVGQKTDGKDFLINLIDSPGHVDFSSEVTAALRVTDGALVVVDTVEGVCVQTETVLRQALGERIKPVVVINKVDRALLELQVSKEDLYQSFSRTIESVNVIISTYFDKSLGDVQVYPDRGTVAFGSGLHGWAFTIRQFATRYAKKFGVDRNKMMERLWGDNYFNPKTKKWTKNGTYEGKELERAFNQFILDPIFKIFSAVMNFKKDEVAALLEKLNLKLATDDREKEGKQLLKAVMKAFLPAADCLLEMMILHLPSPVTAQAYRAETLYEGPQDDEAAMAIKTCDPKGPLMLYVSKMVPTSDKGRFYAFGRVFAGTVRSGLKVRIQGPNYTPGKKEDLFIKAIQRTVLMMGGKVEPIDDMPAGNIVGLVGIDQFLLKSGTLTTSETAHNMKVMKFSVSPVVQRSVQVKNAQDLPKLVEGLKRLSKSDPCVLTFSNESGEHVVAGAGELHLEICLNDLENDHAGVPLTISDPVVQYRETVAGKSSMTALSKSPNKHNRLYMVAEPLEEDLCLAIEAGKITPRDDFKARARILADDFGWDVTDARKIWAFGPDTNGANLLVDQTKAVQYLNEIKDSVVSGFQWATREGPIGEEPMRSIRFNILDVTLHADAIHRGGGQIIPTARRVLYAATLLAEPSLLEPVFLVEIQVPEQAMGGVYGVLTRRRGHVFGEEQRPGTPLFTIKAYLPVMESFGFNGDLRAATSGQAFPQSVFDHWERLPGGSPLDSTSKVGQIVQEMRKRKGLKVEVPGYENYYDKL</sequence>
<accession>Q96X45</accession>
<accession>Q7RVG5</accession>